<sequence length="491" mass="52449">MTQVLVRNGIQAVGDGLTSLIIVGKKSVLKNVTFEGKFKEVAQKFVTDGDSWNSMISRIPASGRHPLHYELAHLITVPDASSRGNTPTNAHSIYKELKPINYPEDTKNVHFVLFAEYPDVLSHVAAIARTFCKFSMKTSGIRELNVNIDVVCDKLTNEDAVFLTDLSESVRETARLIDTPANILTTDALVDEAVKVGNATGSKITVIRGEELLKAGFGGIYHVGKAGPTPPAFVVLSHEVPGSTEHIALVGKGVVYDTGGLQIKTKTGMPNMKRDMGGAAGMLEAYSALVKHGFSQTLHACLCIVENNVSPIANKPDDIIKMLSGKTVEINNTDAEGRLILADGVFYAKETLKATTIFDMATLTGAQAWLSGRLHGAAMTNDEQLENEIIKAGKASGDLVAPMLFAPDLFFGDLKSSIADMKNSNLGKMDGPPSAVAGLFIGAHIGFGEGLRWLHLDIAAPAEVGDRGTGYGPALFSTLLGKYTSVPMLKQ</sequence>
<gene>
    <name type="primary">lap-1</name>
    <name type="ORF">ZK353.6</name>
</gene>
<proteinExistence type="evidence at protein level"/>
<reference key="1">
    <citation type="journal article" date="1994" name="Nature">
        <title>2.2 Mb of contiguous nucleotide sequence from chromosome III of C. elegans.</title>
        <authorList>
            <person name="Wilson R."/>
            <person name="Ainscough R."/>
            <person name="Anderson K."/>
            <person name="Baynes C."/>
            <person name="Berks M."/>
            <person name="Bonfield J."/>
            <person name="Burton J."/>
            <person name="Connell M."/>
            <person name="Copsey T."/>
            <person name="Cooper J."/>
            <person name="Coulson A."/>
            <person name="Craxton M."/>
            <person name="Dear S."/>
            <person name="Du Z."/>
            <person name="Durbin R."/>
            <person name="Favello A."/>
            <person name="Fraser A."/>
            <person name="Fulton L."/>
            <person name="Gardner A."/>
            <person name="Green P."/>
            <person name="Hawkins T."/>
            <person name="Hillier L."/>
            <person name="Jier M."/>
            <person name="Johnston L."/>
            <person name="Jones M."/>
            <person name="Kershaw J."/>
            <person name="Kirsten J."/>
            <person name="Laisster N."/>
            <person name="Latreille P."/>
            <person name="Lightning J."/>
            <person name="Lloyd C."/>
            <person name="Mortimore B."/>
            <person name="O'Callaghan M."/>
            <person name="Parsons J."/>
            <person name="Percy C."/>
            <person name="Rifken L."/>
            <person name="Roopra A."/>
            <person name="Saunders D."/>
            <person name="Shownkeen R."/>
            <person name="Sims M."/>
            <person name="Smaldon N."/>
            <person name="Smith A."/>
            <person name="Smith M."/>
            <person name="Sonnhammer E."/>
            <person name="Staden R."/>
            <person name="Sulston J."/>
            <person name="Thierry-Mieg J."/>
            <person name="Thomas K."/>
            <person name="Vaudin M."/>
            <person name="Vaughan K."/>
            <person name="Waterston R."/>
            <person name="Watson A."/>
            <person name="Weinstock L."/>
            <person name="Wilkinson-Sproat J."/>
            <person name="Wohldman P."/>
        </authorList>
    </citation>
    <scope>NUCLEOTIDE SEQUENCE [LARGE SCALE GENOMIC DNA]</scope>
    <source>
        <strain>Bristol N2</strain>
    </source>
</reference>
<reference key="2">
    <citation type="journal article" date="1998" name="Science">
        <title>Genome sequence of the nematode C. elegans: a platform for investigating biology.</title>
        <authorList>
            <consortium name="The C. elegans sequencing consortium"/>
        </authorList>
    </citation>
    <scope>NUCLEOTIDE SEQUENCE [LARGE SCALE GENOMIC DNA]</scope>
    <source>
        <strain>Bristol N2</strain>
    </source>
</reference>
<reference key="3">
    <citation type="journal article" date="2001" name="Mol. Biochem. Parasitol.">
        <title>Functional analysis of leucine aminopeptidase in Caenorhabditis elegans.</title>
        <authorList>
            <person name="Joshua G.W."/>
        </authorList>
    </citation>
    <scope>FUNCTION</scope>
    <scope>TISSUE SPECIFICITY</scope>
</reference>
<name>AMPL_CAEEL</name>
<feature type="chain" id="PRO_0000165831" description="Leucine aminopeptidase 1">
    <location>
        <begin position="1"/>
        <end position="491"/>
    </location>
</feature>
<feature type="active site" evidence="2">
    <location>
        <position position="264"/>
    </location>
</feature>
<feature type="active site" evidence="2">
    <location>
        <position position="338"/>
    </location>
</feature>
<feature type="binding site" evidence="1">
    <location>
        <position position="252"/>
    </location>
    <ligand>
        <name>Zn(2+)</name>
        <dbReference type="ChEBI" id="CHEBI:29105"/>
        <label>2</label>
    </ligand>
</feature>
<feature type="binding site" evidence="1">
    <location>
        <position position="257"/>
    </location>
    <ligand>
        <name>Zn(2+)</name>
        <dbReference type="ChEBI" id="CHEBI:29105"/>
        <label>1</label>
    </ligand>
</feature>
<feature type="binding site" evidence="1">
    <location>
        <position position="257"/>
    </location>
    <ligand>
        <name>Zn(2+)</name>
        <dbReference type="ChEBI" id="CHEBI:29105"/>
        <label>2</label>
    </ligand>
</feature>
<feature type="binding site" evidence="1">
    <location>
        <position position="275"/>
    </location>
    <ligand>
        <name>Zn(2+)</name>
        <dbReference type="ChEBI" id="CHEBI:29105"/>
        <label>2</label>
    </ligand>
</feature>
<feature type="binding site" evidence="1">
    <location>
        <position position="334"/>
    </location>
    <ligand>
        <name>Zn(2+)</name>
        <dbReference type="ChEBI" id="CHEBI:29105"/>
        <label>1</label>
    </ligand>
</feature>
<feature type="binding site" evidence="1">
    <location>
        <position position="336"/>
    </location>
    <ligand>
        <name>Zn(2+)</name>
        <dbReference type="ChEBI" id="CHEBI:29105"/>
        <label>1</label>
    </ligand>
</feature>
<feature type="binding site" evidence="1">
    <location>
        <position position="336"/>
    </location>
    <ligand>
        <name>Zn(2+)</name>
        <dbReference type="ChEBI" id="CHEBI:29105"/>
        <label>2</label>
    </ligand>
</feature>
<feature type="strand" evidence="5">
    <location>
        <begin position="3"/>
        <end position="9"/>
    </location>
</feature>
<feature type="strand" evidence="5">
    <location>
        <begin position="18"/>
        <end position="25"/>
    </location>
</feature>
<feature type="helix" evidence="5">
    <location>
        <begin position="26"/>
        <end position="31"/>
    </location>
</feature>
<feature type="helix" evidence="5">
    <location>
        <begin position="36"/>
        <end position="42"/>
    </location>
</feature>
<feature type="turn" evidence="5">
    <location>
        <begin position="43"/>
        <end position="45"/>
    </location>
</feature>
<feature type="helix" evidence="5">
    <location>
        <begin position="49"/>
        <end position="58"/>
    </location>
</feature>
<feature type="strand" evidence="5">
    <location>
        <begin position="61"/>
        <end position="77"/>
    </location>
</feature>
<feature type="helix" evidence="5">
    <location>
        <begin position="90"/>
        <end position="97"/>
    </location>
</feature>
<feature type="strand" evidence="5">
    <location>
        <begin position="108"/>
        <end position="114"/>
    </location>
</feature>
<feature type="helix" evidence="5">
    <location>
        <begin position="117"/>
        <end position="119"/>
    </location>
</feature>
<feature type="helix" evidence="5">
    <location>
        <begin position="120"/>
        <end position="128"/>
    </location>
</feature>
<feature type="strand" evidence="5">
    <location>
        <begin position="145"/>
        <end position="151"/>
    </location>
</feature>
<feature type="helix" evidence="5">
    <location>
        <begin position="157"/>
        <end position="178"/>
    </location>
</feature>
<feature type="turn" evidence="5">
    <location>
        <begin position="181"/>
        <end position="183"/>
    </location>
</feature>
<feature type="helix" evidence="5">
    <location>
        <begin position="186"/>
        <end position="199"/>
    </location>
</feature>
<feature type="strand" evidence="5">
    <location>
        <begin position="203"/>
        <end position="208"/>
    </location>
</feature>
<feature type="helix" evidence="5">
    <location>
        <begin position="210"/>
        <end position="215"/>
    </location>
</feature>
<feature type="helix" evidence="5">
    <location>
        <begin position="218"/>
        <end position="224"/>
    </location>
</feature>
<feature type="strand" evidence="5">
    <location>
        <begin position="227"/>
        <end position="229"/>
    </location>
</feature>
<feature type="strand" evidence="5">
    <location>
        <begin position="232"/>
        <end position="238"/>
    </location>
</feature>
<feature type="strand" evidence="5">
    <location>
        <begin position="246"/>
        <end position="257"/>
    </location>
</feature>
<feature type="turn" evidence="5">
    <location>
        <begin position="266"/>
        <end position="268"/>
    </location>
</feature>
<feature type="helix" evidence="5">
    <location>
        <begin position="272"/>
        <end position="276"/>
    </location>
</feature>
<feature type="helix" evidence="5">
    <location>
        <begin position="277"/>
        <end position="290"/>
    </location>
</feature>
<feature type="turn" evidence="5">
    <location>
        <begin position="291"/>
        <end position="293"/>
    </location>
</feature>
<feature type="strand" evidence="5">
    <location>
        <begin position="296"/>
        <end position="307"/>
    </location>
</feature>
<feature type="strand" evidence="5">
    <location>
        <begin position="319"/>
        <end position="321"/>
    </location>
</feature>
<feature type="strand" evidence="5">
    <location>
        <begin position="327"/>
        <end position="329"/>
    </location>
</feature>
<feature type="helix" evidence="5">
    <location>
        <begin position="337"/>
        <end position="350"/>
    </location>
</feature>
<feature type="strand" evidence="5">
    <location>
        <begin position="355"/>
        <end position="361"/>
    </location>
</feature>
<feature type="helix" evidence="5">
    <location>
        <begin position="367"/>
        <end position="371"/>
    </location>
</feature>
<feature type="turn" evidence="5">
    <location>
        <begin position="372"/>
        <end position="374"/>
    </location>
</feature>
<feature type="strand" evidence="5">
    <location>
        <begin position="375"/>
        <end position="381"/>
    </location>
</feature>
<feature type="helix" evidence="5">
    <location>
        <begin position="383"/>
        <end position="396"/>
    </location>
</feature>
<feature type="strand" evidence="5">
    <location>
        <begin position="400"/>
        <end position="402"/>
    </location>
</feature>
<feature type="helix" evidence="5">
    <location>
        <begin position="407"/>
        <end position="410"/>
    </location>
</feature>
<feature type="helix" evidence="5">
    <location>
        <begin position="411"/>
        <end position="414"/>
    </location>
</feature>
<feature type="strand" evidence="5">
    <location>
        <begin position="417"/>
        <end position="423"/>
    </location>
</feature>
<feature type="helix" evidence="5">
    <location>
        <begin position="433"/>
        <end position="442"/>
    </location>
</feature>
<feature type="turn" evidence="5">
    <location>
        <begin position="443"/>
        <end position="445"/>
    </location>
</feature>
<feature type="helix" evidence="5">
    <location>
        <begin position="446"/>
        <end position="448"/>
    </location>
</feature>
<feature type="strand" evidence="5">
    <location>
        <begin position="451"/>
        <end position="457"/>
    </location>
</feature>
<feature type="turn" evidence="5">
    <location>
        <begin position="459"/>
        <end position="462"/>
    </location>
</feature>
<feature type="helix" evidence="5">
    <location>
        <begin position="473"/>
        <end position="480"/>
    </location>
</feature>
<feature type="helix" evidence="5">
    <location>
        <begin position="481"/>
        <end position="483"/>
    </location>
</feature>
<feature type="helix" evidence="5">
    <location>
        <begin position="487"/>
        <end position="489"/>
    </location>
</feature>
<protein>
    <recommendedName>
        <fullName>Leucine aminopeptidase 1</fullName>
        <ecNumber>3.4.11.1</ecNumber>
    </recommendedName>
</protein>
<dbReference type="EC" id="3.4.11.1"/>
<dbReference type="EMBL" id="FO081668">
    <property type="protein sequence ID" value="CCD73205.1"/>
    <property type="molecule type" value="Genomic_DNA"/>
</dbReference>
<dbReference type="PIR" id="S44657">
    <property type="entry name" value="S44657"/>
</dbReference>
<dbReference type="RefSeq" id="NP_498854.1">
    <property type="nucleotide sequence ID" value="NM_066453.4"/>
</dbReference>
<dbReference type="PDB" id="2HB6">
    <property type="method" value="X-ray"/>
    <property type="resolution" value="2.00 A"/>
    <property type="chains" value="A/B=1-491"/>
</dbReference>
<dbReference type="PDB" id="2HC9">
    <property type="method" value="X-ray"/>
    <property type="resolution" value="1.85 A"/>
    <property type="chains" value="A=1-491"/>
</dbReference>
<dbReference type="PDBsum" id="2HB6"/>
<dbReference type="PDBsum" id="2HC9"/>
<dbReference type="SMR" id="P34629"/>
<dbReference type="BioGRID" id="41389">
    <property type="interactions" value="36"/>
</dbReference>
<dbReference type="DIP" id="DIP-27312N"/>
<dbReference type="FunCoup" id="P34629">
    <property type="interactions" value="1488"/>
</dbReference>
<dbReference type="IntAct" id="P34629">
    <property type="interactions" value="3"/>
</dbReference>
<dbReference type="STRING" id="6239.ZK353.6.1"/>
<dbReference type="MEROPS" id="M17.A05"/>
<dbReference type="PaxDb" id="6239-ZK353.6"/>
<dbReference type="PeptideAtlas" id="P34629"/>
<dbReference type="EnsemblMetazoa" id="ZK353.6.1">
    <property type="protein sequence ID" value="ZK353.6.1"/>
    <property type="gene ID" value="WBGene00002249"/>
</dbReference>
<dbReference type="GeneID" id="176185"/>
<dbReference type="KEGG" id="cel:CELE_ZK353.6"/>
<dbReference type="UCSC" id="ZK353.6.1">
    <property type="organism name" value="c. elegans"/>
</dbReference>
<dbReference type="AGR" id="WB:WBGene00002249"/>
<dbReference type="CTD" id="176185"/>
<dbReference type="WormBase" id="ZK353.6">
    <property type="protein sequence ID" value="CE00390"/>
    <property type="gene ID" value="WBGene00002249"/>
    <property type="gene designation" value="lap-1"/>
</dbReference>
<dbReference type="eggNOG" id="KOG2597">
    <property type="taxonomic scope" value="Eukaryota"/>
</dbReference>
<dbReference type="GeneTree" id="ENSGT00530000063255"/>
<dbReference type="HOGENOM" id="CLU_013734_3_1_1"/>
<dbReference type="InParanoid" id="P34629"/>
<dbReference type="OMA" id="LGKMDGP"/>
<dbReference type="OrthoDB" id="412814at2759"/>
<dbReference type="PhylomeDB" id="P34629"/>
<dbReference type="SignaLink" id="P34629"/>
<dbReference type="EvolutionaryTrace" id="P34629"/>
<dbReference type="PRO" id="PR:P34629"/>
<dbReference type="Proteomes" id="UP000001940">
    <property type="component" value="Chromosome III"/>
</dbReference>
<dbReference type="Bgee" id="WBGene00002249">
    <property type="expression patterns" value="Expressed in adult organism and 4 other cell types or tissues"/>
</dbReference>
<dbReference type="GO" id="GO:0005737">
    <property type="term" value="C:cytoplasm"/>
    <property type="evidence" value="ECO:0000318"/>
    <property type="project" value="GO_Central"/>
</dbReference>
<dbReference type="GO" id="GO:0042802">
    <property type="term" value="F:identical protein binding"/>
    <property type="evidence" value="ECO:0000353"/>
    <property type="project" value="IntAct"/>
</dbReference>
<dbReference type="GO" id="GO:0030145">
    <property type="term" value="F:manganese ion binding"/>
    <property type="evidence" value="ECO:0007669"/>
    <property type="project" value="InterPro"/>
</dbReference>
<dbReference type="GO" id="GO:0070006">
    <property type="term" value="F:metalloaminopeptidase activity"/>
    <property type="evidence" value="ECO:0007669"/>
    <property type="project" value="InterPro"/>
</dbReference>
<dbReference type="GO" id="GO:0008233">
    <property type="term" value="F:peptidase activity"/>
    <property type="evidence" value="ECO:0000318"/>
    <property type="project" value="GO_Central"/>
</dbReference>
<dbReference type="GO" id="GO:0006508">
    <property type="term" value="P:proteolysis"/>
    <property type="evidence" value="ECO:0000318"/>
    <property type="project" value="GO_Central"/>
</dbReference>
<dbReference type="GO" id="GO:0046662">
    <property type="term" value="P:regulation of egg-laying behavior"/>
    <property type="evidence" value="ECO:0000315"/>
    <property type="project" value="WormBase"/>
</dbReference>
<dbReference type="GO" id="GO:0040009">
    <property type="term" value="P:regulation of growth rate"/>
    <property type="evidence" value="ECO:0000315"/>
    <property type="project" value="WormBase"/>
</dbReference>
<dbReference type="CDD" id="cd00433">
    <property type="entry name" value="Peptidase_M17"/>
    <property type="match status" value="1"/>
</dbReference>
<dbReference type="Gene3D" id="3.40.630.10">
    <property type="entry name" value="Zn peptidases"/>
    <property type="match status" value="1"/>
</dbReference>
<dbReference type="Gene3D" id="3.40.50.10590">
    <property type="entry name" value="Zn-dependent exopeptidases"/>
    <property type="match status" value="1"/>
</dbReference>
<dbReference type="InterPro" id="IPR011356">
    <property type="entry name" value="Leucine_aapep/pepB"/>
</dbReference>
<dbReference type="InterPro" id="IPR041417">
    <property type="entry name" value="NPEPL1_N"/>
</dbReference>
<dbReference type="InterPro" id="IPR000819">
    <property type="entry name" value="Peptidase_M17_C"/>
</dbReference>
<dbReference type="PANTHER" id="PTHR11963:SF4">
    <property type="entry name" value="AMINOPEPTIDASE NPEPL1-RELATED"/>
    <property type="match status" value="1"/>
</dbReference>
<dbReference type="PANTHER" id="PTHR11963">
    <property type="entry name" value="LEUCINE AMINOPEPTIDASE-RELATED"/>
    <property type="match status" value="1"/>
</dbReference>
<dbReference type="Pfam" id="PF18295">
    <property type="entry name" value="Pdase_M17_N2"/>
    <property type="match status" value="1"/>
</dbReference>
<dbReference type="Pfam" id="PF00883">
    <property type="entry name" value="Peptidase_M17"/>
    <property type="match status" value="1"/>
</dbReference>
<dbReference type="PRINTS" id="PR00481">
    <property type="entry name" value="LAMNOPPTDASE"/>
</dbReference>
<dbReference type="SUPFAM" id="SSF53187">
    <property type="entry name" value="Zn-dependent exopeptidases"/>
    <property type="match status" value="1"/>
</dbReference>
<dbReference type="PROSITE" id="PS00631">
    <property type="entry name" value="CYTOSOL_AP"/>
    <property type="match status" value="1"/>
</dbReference>
<comment type="function">
    <text evidence="3">Probably acts as a digestive enzyme.</text>
</comment>
<comment type="catalytic activity">
    <reaction>
        <text>Release of an N-terminal amino acid, Xaa-|-Yaa-, in which Xaa is preferably Leu, but may be other amino acids including Pro although not Arg or Lys, and Yaa may be Pro. Amino acid amides and methyl esters are also readily hydrolyzed, but rates on arylamides are exceedingly low.</text>
        <dbReference type="EC" id="3.4.11.1"/>
    </reaction>
</comment>
<comment type="cofactor">
    <cofactor evidence="1">
        <name>Zn(2+)</name>
        <dbReference type="ChEBI" id="CHEBI:29105"/>
    </cofactor>
    <text evidence="1">Binds 2 Zn(2+) ions per subunit.</text>
</comment>
<comment type="interaction">
    <interactant intactId="EBI-332157">
        <id>P34629</id>
    </interactant>
    <interactant intactId="EBI-332157">
        <id>P34629</id>
        <label>lap-1</label>
    </interactant>
    <organismsDiffer>false</organismsDiffer>
    <experiments>5</experiments>
</comment>
<comment type="interaction">
    <interactant intactId="EBI-332157">
        <id>P34629</id>
    </interactant>
    <interactant intactId="EBI-327961">
        <id>O01812</id>
        <label>lbp-6</label>
    </interactant>
    <organismsDiffer>false</organismsDiffer>
    <experiments>2</experiments>
</comment>
<comment type="tissue specificity">
    <text evidence="3">Expressed in the buccal cavity, pharynx, anterior gut and rectum.</text>
</comment>
<comment type="similarity">
    <text evidence="4">Belongs to the peptidase M17 family.</text>
</comment>
<accession>P34629</accession>
<organism>
    <name type="scientific">Caenorhabditis elegans</name>
    <dbReference type="NCBI Taxonomy" id="6239"/>
    <lineage>
        <taxon>Eukaryota</taxon>
        <taxon>Metazoa</taxon>
        <taxon>Ecdysozoa</taxon>
        <taxon>Nematoda</taxon>
        <taxon>Chromadorea</taxon>
        <taxon>Rhabditida</taxon>
        <taxon>Rhabditina</taxon>
        <taxon>Rhabditomorpha</taxon>
        <taxon>Rhabditoidea</taxon>
        <taxon>Rhabditidae</taxon>
        <taxon>Peloderinae</taxon>
        <taxon>Caenorhabditis</taxon>
    </lineage>
</organism>
<evidence type="ECO:0000250" key="1"/>
<evidence type="ECO:0000255" key="2"/>
<evidence type="ECO:0000269" key="3">
    <source>
    </source>
</evidence>
<evidence type="ECO:0000305" key="4"/>
<evidence type="ECO:0007829" key="5">
    <source>
        <dbReference type="PDB" id="2HC9"/>
    </source>
</evidence>
<keyword id="KW-0002">3D-structure</keyword>
<keyword id="KW-0031">Aminopeptidase</keyword>
<keyword id="KW-0378">Hydrolase</keyword>
<keyword id="KW-0479">Metal-binding</keyword>
<keyword id="KW-0645">Protease</keyword>
<keyword id="KW-1185">Reference proteome</keyword>
<keyword id="KW-0862">Zinc</keyword>